<comment type="function">
    <text evidence="1 2 7">Involved in transforming growth factor beta (TGF-beta)-induced smooth muscle differentiation. TGF-beta induces expression and translocation of OLFM2 to the nucleus where it binds to SRF, causing its dissociation from the transcriptional repressor HEY2/HERP1 and facilitating binding of SRF to target genes (PubMed:25298399). Plays a role in AMPAR complex organization (By similarity). Is a regulator of vascular smooth-muscle cell (SMC) phenotypic switching, that acts by promoting RUNX2 and inhibiting MYOCD binding to SRF. SMC phenotypic switching is the process through which vascular SMCs undergo transition between a quiescent contractile phenotype and a proliferative synthetic phenotype in response to pathological stimuli. SMC phenotypic plasticity is essential for vascular development and remodeling (By similarity).</text>
</comment>
<comment type="subunit">
    <text evidence="1 2 6 7">Peripherally associated with AMPAR complex. AMPAR complex consists of an inner core made of 4 pore-forming GluA/GRIA proteins (GRIA1, GRIA2, GRIA3 and GRIA4) and 4 major auxiliary subunits arranged in a twofold symmetry. One of the two pairs of distinct binding sites is occupied either by CNIH2, CNIH3 or CACNG2, CACNG3. The other harbors CACNG2, CACNG3, CACNG4, CACNG8 or GSG1L. This inner core of AMPAR complex is complemented by outer core constituents binding directly to the GluA/GRIA proteins at sites distinct from the interaction sites of the inner core constituents. Outer core constituents include at least PRRT1, PRRT2, CKAMP44/SHISA9, FRRS1L and NRN1. The proteins of the inner and outer core serve as a platform for other, more peripherally associated AMPAR constituents, including OLFM2. Alone or in combination, these auxiliary subunits control the gating and pharmacology of the AMPAR complex and profoundly impact their biogenesis and protein processing. Interacts with GRIA2 (By similarity). Interacts with OLFM1 and OLFM3 (PubMed:21228389). Interacts with SRF; the interaction promotes dissociation of SRF from the transcriptional repressor HEY2 (PubMed:25298399). Interacts with RUNX2 (By similarity).</text>
</comment>
<comment type="interaction">
    <interactant intactId="EBI-721741">
        <id>O95897</id>
    </interactant>
    <interactant intactId="EBI-11749135">
        <id>Q8IUG1</id>
        <label>KRTAP1-3</label>
    </interactant>
    <organismsDiffer>false</organismsDiffer>
    <experiments>3</experiments>
</comment>
<comment type="interaction">
    <interactant intactId="EBI-721741">
        <id>O95897</id>
    </interactant>
    <interactant intactId="EBI-22310682">
        <id>P0DPK4</id>
        <label>NOTCH2NLC</label>
    </interactant>
    <organismsDiffer>false</organismsDiffer>
    <experiments>3</experiments>
</comment>
<comment type="subcellular location">
    <subcellularLocation>
        <location evidence="6">Secreted</location>
    </subcellularLocation>
    <subcellularLocation>
        <location evidence="2">Synapse</location>
    </subcellularLocation>
    <subcellularLocation>
        <location evidence="2">Membrane</location>
    </subcellularLocation>
    <subcellularLocation>
        <location evidence="7">Nucleus</location>
    </subcellularLocation>
    <subcellularLocation>
        <location evidence="7">Cytoplasm</location>
    </subcellularLocation>
    <text evidence="7">Nuclear localization is induced by TGF-beta.</text>
</comment>
<comment type="tissue specificity">
    <text evidence="7 8">Expressed in aortic smooth muscle (at protein level) (PubMed:25298399). In the fetus, expressed in the brain and ocular tissues including lens vesicle and optic cup (PubMed:27844144).</text>
</comment>
<comment type="induction">
    <text evidence="7">By TGF-beta.</text>
</comment>
<comment type="PTM">
    <text evidence="6">N-glycosylated.</text>
</comment>
<feature type="signal peptide" evidence="3">
    <location>
        <begin position="1"/>
        <end position="20"/>
    </location>
</feature>
<feature type="chain" id="PRO_0000020078" description="Noelin-2">
    <location>
        <begin position="21"/>
        <end position="454"/>
    </location>
</feature>
<feature type="domain" description="Olfactomedin-like" evidence="4">
    <location>
        <begin position="194"/>
        <end position="446"/>
    </location>
</feature>
<feature type="coiled-coil region" evidence="3">
    <location>
        <begin position="58"/>
        <end position="85"/>
    </location>
</feature>
<feature type="coiled-coil region" evidence="3">
    <location>
        <begin position="136"/>
        <end position="193"/>
    </location>
</feature>
<feature type="glycosylation site" description="N-linked (GlcNAc...) asparagine" evidence="3">
    <location>
        <position position="74"/>
    </location>
</feature>
<feature type="glycosylation site" description="N-linked (GlcNAc...) asparagine" evidence="3">
    <location>
        <position position="155"/>
    </location>
</feature>
<feature type="glycosylation site" description="N-linked (GlcNAc...) asparagine" evidence="3">
    <location>
        <position position="275"/>
    </location>
</feature>
<feature type="glycosylation site" description="N-linked (GlcNAc...) asparagine" evidence="3">
    <location>
        <position position="310"/>
    </location>
</feature>
<feature type="glycosylation site" description="N-linked (GlcNAc...) asparagine" evidence="3">
    <location>
        <position position="399"/>
    </location>
</feature>
<feature type="glycosylation site" description="N-linked (GlcNAc...) asparagine" evidence="3">
    <location>
        <position position="441"/>
    </location>
</feature>
<feature type="disulfide bond" evidence="4">
    <location>
        <begin position="195"/>
        <end position="377"/>
    </location>
</feature>
<feature type="sequence variant" id="VAR_036532" description="In a colorectal cancer sample; somatic mutation; no effect on secretion; dbSNP:rs1298178636." evidence="5 6">
    <original>T</original>
    <variation>M</variation>
    <location>
        <position position="86"/>
    </location>
</feature>
<feature type="sequence variant" id="VAR_022550" description="In dbSNP:rs2303100." evidence="9">
    <original>R</original>
    <variation>Q</variation>
    <location>
        <position position="106"/>
    </location>
</feature>
<feature type="sequence variant" id="VAR_050423" description="In dbSNP:rs11556087." evidence="9">
    <original>T</original>
    <variation>M</variation>
    <location>
        <position position="127"/>
    </location>
</feature>
<feature type="mutagenesis site" description="No effect on secretion." evidence="6">
    <original>R</original>
    <variation>Q</variation>
    <location>
        <position position="144"/>
    </location>
</feature>
<feature type="mutagenesis site" description="Completely blocks secretion. Also significantly inhibits secretion of OLFM1 and OLFM3." evidence="6">
    <original>L</original>
    <variation>S</variation>
    <location>
        <position position="420"/>
    </location>
</feature>
<sequence length="454" mass="51386">MWPLTVPPPLLLLLCSGLAGQTLFQNPEEGWQLYTSAQAPDGKCICTAVIPAQSTCSRDGRSRELRQLMEKVQNVSQSMEVLELRTYRDLQYVRGMETLMRSLDARLRAADGSLSAKSFQELKDRMTELLPLSSVLEQYKADTRTIVRLREEVRNLSGSLAAIQEEMGAYGYEDLQQRVMALEARLHACAQKLGCGKLTGVSNPITVRAMGSRFGSWMTDTMAPSADSRVWYMDGYYKGRRVLEFRTLGDFIKGQNFIQHLLPQPWAGTGHVVYNGSLFYNKYQSNVVVKYHFRSRSVLVQRSLPGAGYNNTFPYSWGGFSDMDFMVDESGLWAVYTTNQNAGNIVVSRLDPHTLEVMRSWDTGYPKRSAGEAFMICGVLYVTNSHLAGAKVYFAYFTNTSSYEYTDVPFHNQYSHISMLDYNPRERALYTWNNGHQVLYNVTLFHVISTSGDP</sequence>
<accession>O95897</accession>
<accession>Q6IMJ3</accession>
<accession>Q96FC2</accession>
<name>NOE2_HUMAN</name>
<organism>
    <name type="scientific">Homo sapiens</name>
    <name type="common">Human</name>
    <dbReference type="NCBI Taxonomy" id="9606"/>
    <lineage>
        <taxon>Eukaryota</taxon>
        <taxon>Metazoa</taxon>
        <taxon>Chordata</taxon>
        <taxon>Craniata</taxon>
        <taxon>Vertebrata</taxon>
        <taxon>Euteleostomi</taxon>
        <taxon>Mammalia</taxon>
        <taxon>Eutheria</taxon>
        <taxon>Euarchontoglires</taxon>
        <taxon>Primates</taxon>
        <taxon>Haplorrhini</taxon>
        <taxon>Catarrhini</taxon>
        <taxon>Hominidae</taxon>
        <taxon>Homo</taxon>
    </lineage>
</organism>
<keyword id="KW-0175">Coiled coil</keyword>
<keyword id="KW-0963">Cytoplasm</keyword>
<keyword id="KW-1015">Disulfide bond</keyword>
<keyword id="KW-0325">Glycoprotein</keyword>
<keyword id="KW-0472">Membrane</keyword>
<keyword id="KW-0539">Nucleus</keyword>
<keyword id="KW-1267">Proteomics identification</keyword>
<keyword id="KW-1185">Reference proteome</keyword>
<keyword id="KW-0964">Secreted</keyword>
<keyword id="KW-0732">Signal</keyword>
<keyword id="KW-0770">Synapse</keyword>
<dbReference type="EMBL" id="AF131839">
    <property type="protein sequence ID" value="AAD20056.1"/>
    <property type="molecule type" value="mRNA"/>
</dbReference>
<dbReference type="EMBL" id="AC008742">
    <property type="status" value="NOT_ANNOTATED_CDS"/>
    <property type="molecule type" value="Genomic_DNA"/>
</dbReference>
<dbReference type="EMBL" id="BC011361">
    <property type="protein sequence ID" value="AAH11361.1"/>
    <property type="molecule type" value="mRNA"/>
</dbReference>
<dbReference type="EMBL" id="BK001428">
    <property type="protein sequence ID" value="DAA01550.1"/>
    <property type="molecule type" value="Genomic_DNA"/>
</dbReference>
<dbReference type="CCDS" id="CCDS12221.1"/>
<dbReference type="RefSeq" id="NP_001291276.1">
    <property type="nucleotide sequence ID" value="NM_001304347.1"/>
</dbReference>
<dbReference type="RefSeq" id="NP_001291277.1">
    <property type="nucleotide sequence ID" value="NM_001304348.1"/>
</dbReference>
<dbReference type="RefSeq" id="NP_477512.1">
    <property type="nucleotide sequence ID" value="NM_058164.4"/>
</dbReference>
<dbReference type="SMR" id="O95897"/>
<dbReference type="BioGRID" id="125007">
    <property type="interactions" value="123"/>
</dbReference>
<dbReference type="FunCoup" id="O95897">
    <property type="interactions" value="307"/>
</dbReference>
<dbReference type="IntAct" id="O95897">
    <property type="interactions" value="91"/>
</dbReference>
<dbReference type="STRING" id="9606.ENSP00000264833"/>
<dbReference type="GlyConnect" id="1963">
    <property type="glycosylation" value="5 N-Linked glycans (1 site)"/>
</dbReference>
<dbReference type="GlyCosmos" id="O95897">
    <property type="glycosylation" value="6 sites, 5 glycans"/>
</dbReference>
<dbReference type="GlyGen" id="O95897">
    <property type="glycosylation" value="6 sites, 7 N-linked glycans (2 sites)"/>
</dbReference>
<dbReference type="iPTMnet" id="O95897"/>
<dbReference type="PhosphoSitePlus" id="O95897"/>
<dbReference type="BioMuta" id="OLFM2"/>
<dbReference type="jPOST" id="O95897"/>
<dbReference type="MassIVE" id="O95897"/>
<dbReference type="PaxDb" id="9606-ENSP00000264833"/>
<dbReference type="PeptideAtlas" id="O95897"/>
<dbReference type="ProteomicsDB" id="51119"/>
<dbReference type="Antibodypedia" id="42819">
    <property type="antibodies" value="48 antibodies from 16 providers"/>
</dbReference>
<dbReference type="DNASU" id="93145"/>
<dbReference type="Ensembl" id="ENST00000264833.9">
    <property type="protein sequence ID" value="ENSP00000264833.3"/>
    <property type="gene ID" value="ENSG00000105088.9"/>
</dbReference>
<dbReference type="GeneID" id="93145"/>
<dbReference type="KEGG" id="hsa:93145"/>
<dbReference type="MANE-Select" id="ENST00000264833.9">
    <property type="protein sequence ID" value="ENSP00000264833.3"/>
    <property type="RefSeq nucleotide sequence ID" value="NM_058164.4"/>
    <property type="RefSeq protein sequence ID" value="NP_477512.1"/>
</dbReference>
<dbReference type="UCSC" id="uc002mmp.4">
    <property type="organism name" value="human"/>
</dbReference>
<dbReference type="AGR" id="HGNC:17189"/>
<dbReference type="CTD" id="93145"/>
<dbReference type="DisGeNET" id="93145"/>
<dbReference type="GeneCards" id="OLFM2"/>
<dbReference type="HGNC" id="HGNC:17189">
    <property type="gene designation" value="OLFM2"/>
</dbReference>
<dbReference type="HPA" id="ENSG00000105088">
    <property type="expression patterns" value="Tissue enhanced (brain, skin)"/>
</dbReference>
<dbReference type="MIM" id="617492">
    <property type="type" value="gene"/>
</dbReference>
<dbReference type="neXtProt" id="NX_O95897"/>
<dbReference type="OpenTargets" id="ENSG00000105088"/>
<dbReference type="PharmGKB" id="PA31916"/>
<dbReference type="VEuPathDB" id="HostDB:ENSG00000105088"/>
<dbReference type="eggNOG" id="KOG3545">
    <property type="taxonomic scope" value="Eukaryota"/>
</dbReference>
<dbReference type="GeneTree" id="ENSGT00940000159148"/>
<dbReference type="InParanoid" id="O95897"/>
<dbReference type="OMA" id="HQVVYNV"/>
<dbReference type="OrthoDB" id="8626508at2759"/>
<dbReference type="PAN-GO" id="O95897">
    <property type="GO annotations" value="2 GO annotations based on evolutionary models"/>
</dbReference>
<dbReference type="PhylomeDB" id="O95897"/>
<dbReference type="TreeFam" id="TF315964"/>
<dbReference type="PathwayCommons" id="O95897"/>
<dbReference type="SignaLink" id="O95897"/>
<dbReference type="BioGRID-ORCS" id="93145">
    <property type="hits" value="17 hits in 1148 CRISPR screens"/>
</dbReference>
<dbReference type="ChiTaRS" id="OLFM2">
    <property type="organism name" value="human"/>
</dbReference>
<dbReference type="GeneWiki" id="OLFM2"/>
<dbReference type="GenomeRNAi" id="93145"/>
<dbReference type="Pharos" id="O95897">
    <property type="development level" value="Tbio"/>
</dbReference>
<dbReference type="PRO" id="PR:O95897"/>
<dbReference type="Proteomes" id="UP000005640">
    <property type="component" value="Chromosome 19"/>
</dbReference>
<dbReference type="RNAct" id="O95897">
    <property type="molecule type" value="protein"/>
</dbReference>
<dbReference type="Bgee" id="ENSG00000105088">
    <property type="expression patterns" value="Expressed in cortical plate and 106 other cell types or tissues"/>
</dbReference>
<dbReference type="ExpressionAtlas" id="O95897">
    <property type="expression patterns" value="baseline and differential"/>
</dbReference>
<dbReference type="GO" id="GO:0032281">
    <property type="term" value="C:AMPA glutamate receptor complex"/>
    <property type="evidence" value="ECO:0000250"/>
    <property type="project" value="UniProtKB"/>
</dbReference>
<dbReference type="GO" id="GO:0005737">
    <property type="term" value="C:cytoplasm"/>
    <property type="evidence" value="ECO:0000314"/>
    <property type="project" value="UniProtKB"/>
</dbReference>
<dbReference type="GO" id="GO:0005576">
    <property type="term" value="C:extracellular region"/>
    <property type="evidence" value="ECO:0000314"/>
    <property type="project" value="MGI"/>
</dbReference>
<dbReference type="GO" id="GO:0005615">
    <property type="term" value="C:extracellular space"/>
    <property type="evidence" value="ECO:0000318"/>
    <property type="project" value="GO_Central"/>
</dbReference>
<dbReference type="GO" id="GO:0005654">
    <property type="term" value="C:nucleoplasm"/>
    <property type="evidence" value="ECO:0000314"/>
    <property type="project" value="HPA"/>
</dbReference>
<dbReference type="GO" id="GO:0005634">
    <property type="term" value="C:nucleus"/>
    <property type="evidence" value="ECO:0000314"/>
    <property type="project" value="UniProtKB"/>
</dbReference>
<dbReference type="GO" id="GO:0045202">
    <property type="term" value="C:synapse"/>
    <property type="evidence" value="ECO:0007669"/>
    <property type="project" value="UniProtKB-SubCell"/>
</dbReference>
<dbReference type="GO" id="GO:0051152">
    <property type="term" value="P:positive regulation of smooth muscle cell differentiation"/>
    <property type="evidence" value="ECO:0000315"/>
    <property type="project" value="UniProtKB"/>
</dbReference>
<dbReference type="GO" id="GO:0009306">
    <property type="term" value="P:protein secretion"/>
    <property type="evidence" value="ECO:0000314"/>
    <property type="project" value="MGI"/>
</dbReference>
<dbReference type="GO" id="GO:1905174">
    <property type="term" value="P:regulation of vascular associated smooth muscle cell dedifferentiation"/>
    <property type="evidence" value="ECO:0000250"/>
    <property type="project" value="UniProtKB"/>
</dbReference>
<dbReference type="GO" id="GO:0007165">
    <property type="term" value="P:signal transduction"/>
    <property type="evidence" value="ECO:0000318"/>
    <property type="project" value="GO_Central"/>
</dbReference>
<dbReference type="InterPro" id="IPR022082">
    <property type="entry name" value="Noelin_dom"/>
</dbReference>
<dbReference type="InterPro" id="IPR003112">
    <property type="entry name" value="Olfac-like_dom"/>
</dbReference>
<dbReference type="InterPro" id="IPR050605">
    <property type="entry name" value="Olfactomedin-like_domain"/>
</dbReference>
<dbReference type="PANTHER" id="PTHR23192:SF27">
    <property type="entry name" value="NOELIN-2"/>
    <property type="match status" value="1"/>
</dbReference>
<dbReference type="PANTHER" id="PTHR23192">
    <property type="entry name" value="OLFACTOMEDIN-RELATED"/>
    <property type="match status" value="1"/>
</dbReference>
<dbReference type="Pfam" id="PF12308">
    <property type="entry name" value="Noelin-1"/>
    <property type="match status" value="1"/>
</dbReference>
<dbReference type="Pfam" id="PF02191">
    <property type="entry name" value="OLF"/>
    <property type="match status" value="1"/>
</dbReference>
<dbReference type="SMART" id="SM00284">
    <property type="entry name" value="OLF"/>
    <property type="match status" value="1"/>
</dbReference>
<dbReference type="PROSITE" id="PS51132">
    <property type="entry name" value="OLF"/>
    <property type="match status" value="1"/>
</dbReference>
<gene>
    <name type="primary">OLFM2</name>
    <name type="synonym">NOE2</name>
</gene>
<protein>
    <recommendedName>
        <fullName>Noelin-2</fullName>
    </recommendedName>
    <alternativeName>
        <fullName>Olfactomedin-2</fullName>
    </alternativeName>
</protein>
<evidence type="ECO:0000250" key="1">
    <source>
        <dbReference type="UniProtKB" id="Q568Y7"/>
    </source>
</evidence>
<evidence type="ECO:0000250" key="2">
    <source>
        <dbReference type="UniProtKB" id="Q8BM13"/>
    </source>
</evidence>
<evidence type="ECO:0000255" key="3"/>
<evidence type="ECO:0000255" key="4">
    <source>
        <dbReference type="PROSITE-ProRule" id="PRU00446"/>
    </source>
</evidence>
<evidence type="ECO:0000269" key="5">
    <source>
    </source>
</evidence>
<evidence type="ECO:0000269" key="6">
    <source>
    </source>
</evidence>
<evidence type="ECO:0000269" key="7">
    <source>
    </source>
</evidence>
<evidence type="ECO:0000269" key="8">
    <source>
    </source>
</evidence>
<evidence type="ECO:0000269" key="9">
    <source ref="1"/>
</evidence>
<reference key="1">
    <citation type="submission" date="1999-02" db="EMBL/GenBank/DDBJ databases">
        <authorList>
            <person name="Mei G."/>
            <person name="Yu W."/>
            <person name="Gibbs R.A."/>
        </authorList>
    </citation>
    <scope>NUCLEOTIDE SEQUENCE [LARGE SCALE MRNA]</scope>
    <scope>VARIANTS GLN-106 AND MET-127</scope>
    <source>
        <tissue>Brain</tissue>
    </source>
</reference>
<reference key="2">
    <citation type="journal article" date="2004" name="Nature">
        <title>The DNA sequence and biology of human chromosome 19.</title>
        <authorList>
            <person name="Grimwood J."/>
            <person name="Gordon L.A."/>
            <person name="Olsen A.S."/>
            <person name="Terry A."/>
            <person name="Schmutz J."/>
            <person name="Lamerdin J.E."/>
            <person name="Hellsten U."/>
            <person name="Goodstein D."/>
            <person name="Couronne O."/>
            <person name="Tran-Gyamfi M."/>
            <person name="Aerts A."/>
            <person name="Altherr M."/>
            <person name="Ashworth L."/>
            <person name="Bajorek E."/>
            <person name="Black S."/>
            <person name="Branscomb E."/>
            <person name="Caenepeel S."/>
            <person name="Carrano A.V."/>
            <person name="Caoile C."/>
            <person name="Chan Y.M."/>
            <person name="Christensen M."/>
            <person name="Cleland C.A."/>
            <person name="Copeland A."/>
            <person name="Dalin E."/>
            <person name="Dehal P."/>
            <person name="Denys M."/>
            <person name="Detter J.C."/>
            <person name="Escobar J."/>
            <person name="Flowers D."/>
            <person name="Fotopulos D."/>
            <person name="Garcia C."/>
            <person name="Georgescu A.M."/>
            <person name="Glavina T."/>
            <person name="Gomez M."/>
            <person name="Gonzales E."/>
            <person name="Groza M."/>
            <person name="Hammon N."/>
            <person name="Hawkins T."/>
            <person name="Haydu L."/>
            <person name="Ho I."/>
            <person name="Huang W."/>
            <person name="Israni S."/>
            <person name="Jett J."/>
            <person name="Kadner K."/>
            <person name="Kimball H."/>
            <person name="Kobayashi A."/>
            <person name="Larionov V."/>
            <person name="Leem S.-H."/>
            <person name="Lopez F."/>
            <person name="Lou Y."/>
            <person name="Lowry S."/>
            <person name="Malfatti S."/>
            <person name="Martinez D."/>
            <person name="McCready P.M."/>
            <person name="Medina C."/>
            <person name="Morgan J."/>
            <person name="Nelson K."/>
            <person name="Nolan M."/>
            <person name="Ovcharenko I."/>
            <person name="Pitluck S."/>
            <person name="Pollard M."/>
            <person name="Popkie A.P."/>
            <person name="Predki P."/>
            <person name="Quan G."/>
            <person name="Ramirez L."/>
            <person name="Rash S."/>
            <person name="Retterer J."/>
            <person name="Rodriguez A."/>
            <person name="Rogers S."/>
            <person name="Salamov A."/>
            <person name="Salazar A."/>
            <person name="She X."/>
            <person name="Smith D."/>
            <person name="Slezak T."/>
            <person name="Solovyev V."/>
            <person name="Thayer N."/>
            <person name="Tice H."/>
            <person name="Tsai M."/>
            <person name="Ustaszewska A."/>
            <person name="Vo N."/>
            <person name="Wagner M."/>
            <person name="Wheeler J."/>
            <person name="Wu K."/>
            <person name="Xie G."/>
            <person name="Yang J."/>
            <person name="Dubchak I."/>
            <person name="Furey T.S."/>
            <person name="DeJong P."/>
            <person name="Dickson M."/>
            <person name="Gordon D."/>
            <person name="Eichler E.E."/>
            <person name="Pennacchio L.A."/>
            <person name="Richardson P."/>
            <person name="Stubbs L."/>
            <person name="Rokhsar D.S."/>
            <person name="Myers R.M."/>
            <person name="Rubin E.M."/>
            <person name="Lucas S.M."/>
        </authorList>
    </citation>
    <scope>NUCLEOTIDE SEQUENCE [LARGE SCALE GENOMIC DNA]</scope>
</reference>
<reference key="3">
    <citation type="journal article" date="2004" name="Genome Res.">
        <title>The status, quality, and expansion of the NIH full-length cDNA project: the Mammalian Gene Collection (MGC).</title>
        <authorList>
            <consortium name="The MGC Project Team"/>
        </authorList>
    </citation>
    <scope>NUCLEOTIDE SEQUENCE [LARGE SCALE MRNA]</scope>
    <source>
        <tissue>Brain</tissue>
    </source>
</reference>
<reference key="4">
    <citation type="journal article" date="2004" name="Mol. Vis.">
        <title>Bioinformatic approaches for identification and characterization of olfactomedin related genes with a potential role in pathogenesis of ocular disorders.</title>
        <authorList>
            <person name="Mukhopadhyay A."/>
            <person name="Talukdar S."/>
            <person name="Bhattacharjee A."/>
            <person name="Ray K."/>
        </authorList>
    </citation>
    <scope>IDENTIFICATION OF GENOMIC DNA</scope>
</reference>
<reference key="5">
    <citation type="journal article" date="2011" name="Invest. Ophthalmol. Vis. Sci.">
        <title>Olfactomedin 2: expression in the eye and interaction with other olfactomedin domain-containing proteins.</title>
        <authorList>
            <person name="Sultana A."/>
            <person name="Nakaya N."/>
            <person name="Senatorov V.V."/>
            <person name="Tomarev S.I."/>
        </authorList>
    </citation>
    <scope>SUBCELLULAR LOCATION</scope>
    <scope>INTERACTION WITH OLFM1 AND OLFM3</scope>
    <scope>GLYCOSYLATION</scope>
    <scope>CHARACTERIZATION OF VARIANT MET-86</scope>
    <scope>MUTAGENESIS OF ARG-144 AND LEU-420</scope>
</reference>
<reference key="6">
    <citation type="journal article" date="2014" name="Mol. Biol. Cell">
        <title>Olfactomedin 2, a novel regulator for transforming growth factor-beta-induced smooth muscle differentiation of human embryonic stem cell-derived mesenchymal cells.</title>
        <authorList>
            <person name="Shi N."/>
            <person name="Guo X."/>
            <person name="Chen S.Y."/>
        </authorList>
    </citation>
    <scope>FUNCTION</scope>
    <scope>INTERACTION WITH SRF</scope>
    <scope>SUBCELLULAR LOCATION</scope>
    <scope>TISSUE SPECIFICITY</scope>
    <scope>INDUCTION</scope>
</reference>
<reference key="7">
    <citation type="journal article" date="2017" name="Hum. Genet.">
        <title>Identification and functional characterisation of genetic variants in OLFM2 in children with developmental eye disorders.</title>
        <authorList>
            <person name="Holt R."/>
            <person name="Ugur Iseri S.A."/>
            <person name="Wyatt A.W."/>
            <person name="Bax D.A."/>
            <person name="Gold Diaz D."/>
            <person name="Santos C."/>
            <person name="Broadgate S."/>
            <person name="Dunn R."/>
            <person name="Bruty J."/>
            <person name="Wallis Y."/>
            <person name="McMullan D."/>
            <person name="Ogilvie C."/>
            <person name="Gerrelli D."/>
            <person name="Zhang Y."/>
            <person name="Ragge N."/>
        </authorList>
    </citation>
    <scope>TISSUE SPECIFICITY</scope>
</reference>
<reference key="8">
    <citation type="journal article" date="2006" name="Science">
        <title>The consensus coding sequences of human breast and colorectal cancers.</title>
        <authorList>
            <person name="Sjoeblom T."/>
            <person name="Jones S."/>
            <person name="Wood L.D."/>
            <person name="Parsons D.W."/>
            <person name="Lin J."/>
            <person name="Barber T.D."/>
            <person name="Mandelker D."/>
            <person name="Leary R.J."/>
            <person name="Ptak J."/>
            <person name="Silliman N."/>
            <person name="Szabo S."/>
            <person name="Buckhaults P."/>
            <person name="Farrell C."/>
            <person name="Meeh P."/>
            <person name="Markowitz S.D."/>
            <person name="Willis J."/>
            <person name="Dawson D."/>
            <person name="Willson J.K.V."/>
            <person name="Gazdar A.F."/>
            <person name="Hartigan J."/>
            <person name="Wu L."/>
            <person name="Liu C."/>
            <person name="Parmigiani G."/>
            <person name="Park B.H."/>
            <person name="Bachman K.E."/>
            <person name="Papadopoulos N."/>
            <person name="Vogelstein B."/>
            <person name="Kinzler K.W."/>
            <person name="Velculescu V.E."/>
        </authorList>
    </citation>
    <scope>VARIANT [LARGE SCALE ANALYSIS] MET-86</scope>
</reference>
<proteinExistence type="evidence at protein level"/>